<protein>
    <recommendedName>
        <fullName>Putative lipoprotein LprD</fullName>
    </recommendedName>
</protein>
<proteinExistence type="inferred from homology"/>
<comment type="subcellular location">
    <subcellularLocation>
        <location evidence="2">Cell membrane</location>
        <topology evidence="2">Lipid-anchor</topology>
    </subcellularLocation>
    <subcellularLocation>
        <location evidence="2">Cell membrane</location>
        <topology evidence="4">Single-pass membrane protein</topology>
    </subcellularLocation>
</comment>
<comment type="similarity">
    <text evidence="4">To M.leprae ML1177.</text>
</comment>
<dbReference type="EMBL" id="AE000516">
    <property type="protein sequence ID" value="AAK45649.1"/>
    <property type="molecule type" value="Genomic_DNA"/>
</dbReference>
<dbReference type="PIR" id="F70739">
    <property type="entry name" value="F70739"/>
</dbReference>
<dbReference type="RefSeq" id="WP_003898833.1">
    <property type="nucleotide sequence ID" value="NZ_KK341227.1"/>
</dbReference>
<dbReference type="SMR" id="P9WK50"/>
<dbReference type="KEGG" id="mtc:MT1384"/>
<dbReference type="PATRIC" id="fig|83331.31.peg.1492"/>
<dbReference type="HOGENOM" id="CLU_122754_0_0_11"/>
<dbReference type="Proteomes" id="UP000001020">
    <property type="component" value="Chromosome"/>
</dbReference>
<dbReference type="GO" id="GO:0005886">
    <property type="term" value="C:plasma membrane"/>
    <property type="evidence" value="ECO:0007669"/>
    <property type="project" value="UniProtKB-SubCell"/>
</dbReference>
<dbReference type="PROSITE" id="PS51257">
    <property type="entry name" value="PROKAR_LIPOPROTEIN"/>
    <property type="match status" value="1"/>
</dbReference>
<organism>
    <name type="scientific">Mycobacterium tuberculosis (strain CDC 1551 / Oshkosh)</name>
    <dbReference type="NCBI Taxonomy" id="83331"/>
    <lineage>
        <taxon>Bacteria</taxon>
        <taxon>Bacillati</taxon>
        <taxon>Actinomycetota</taxon>
        <taxon>Actinomycetes</taxon>
        <taxon>Mycobacteriales</taxon>
        <taxon>Mycobacteriaceae</taxon>
        <taxon>Mycobacterium</taxon>
        <taxon>Mycobacterium tuberculosis complex</taxon>
    </lineage>
</organism>
<feature type="signal peptide" evidence="2">
    <location>
        <begin position="1"/>
        <end position="21"/>
    </location>
</feature>
<feature type="chain" id="PRO_0000427715" description="Putative lipoprotein LprD">
    <location>
        <begin position="22"/>
        <end position="126"/>
    </location>
</feature>
<feature type="transmembrane region" description="Helical" evidence="1">
    <location>
        <begin position="40"/>
        <end position="60"/>
    </location>
</feature>
<feature type="region of interest" description="Disordered" evidence="3">
    <location>
        <begin position="70"/>
        <end position="101"/>
    </location>
</feature>
<feature type="lipid moiety-binding region" description="N-palmitoyl cysteine" evidence="2">
    <location>
        <position position="22"/>
    </location>
</feature>
<feature type="lipid moiety-binding region" description="S-diacylglycerol cysteine" evidence="2">
    <location>
        <position position="22"/>
    </location>
</feature>
<accession>P9WK50</accession>
<accession>L0T6D1</accession>
<accession>Q11013</accession>
<reference key="1">
    <citation type="journal article" date="2002" name="J. Bacteriol.">
        <title>Whole-genome comparison of Mycobacterium tuberculosis clinical and laboratory strains.</title>
        <authorList>
            <person name="Fleischmann R.D."/>
            <person name="Alland D."/>
            <person name="Eisen J.A."/>
            <person name="Carpenter L."/>
            <person name="White O."/>
            <person name="Peterson J.D."/>
            <person name="DeBoy R.T."/>
            <person name="Dodson R.J."/>
            <person name="Gwinn M.L."/>
            <person name="Haft D.H."/>
            <person name="Hickey E.K."/>
            <person name="Kolonay J.F."/>
            <person name="Nelson W.C."/>
            <person name="Umayam L.A."/>
            <person name="Ermolaeva M.D."/>
            <person name="Salzberg S.L."/>
            <person name="Delcher A."/>
            <person name="Utterback T.R."/>
            <person name="Weidman J.F."/>
            <person name="Khouri H.M."/>
            <person name="Gill J."/>
            <person name="Mikula A."/>
            <person name="Bishai W."/>
            <person name="Jacobs W.R. Jr."/>
            <person name="Venter J.C."/>
            <person name="Fraser C.M."/>
        </authorList>
    </citation>
    <scope>NUCLEOTIDE SEQUENCE [LARGE SCALE GENOMIC DNA]</scope>
    <source>
        <strain>CDC 1551 / Oshkosh</strain>
    </source>
</reference>
<keyword id="KW-1003">Cell membrane</keyword>
<keyword id="KW-0449">Lipoprotein</keyword>
<keyword id="KW-0472">Membrane</keyword>
<keyword id="KW-0564">Palmitate</keyword>
<keyword id="KW-1185">Reference proteome</keyword>
<keyword id="KW-0732">Signal</keyword>
<keyword id="KW-0812">Transmembrane</keyword>
<keyword id="KW-1133">Transmembrane helix</keyword>
<name>LPRD_MYCTO</name>
<sequence length="126" mass="14273">MSTTRRRRPALIALVIIATCGCLALGWWQWTRFQSTSGTFQNLGYALQWPLFAWFCVYAYRNFVRYEETPPQPPTGGAAAEIPAGLLPERPKPAQQPPDDPVLREYNAYLAELAKDDARKQNRTTA</sequence>
<evidence type="ECO:0000255" key="1"/>
<evidence type="ECO:0000255" key="2">
    <source>
        <dbReference type="PROSITE-ProRule" id="PRU00303"/>
    </source>
</evidence>
<evidence type="ECO:0000256" key="3">
    <source>
        <dbReference type="SAM" id="MobiDB-lite"/>
    </source>
</evidence>
<evidence type="ECO:0000305" key="4"/>
<gene>
    <name type="primary">lprD</name>
    <name type="ordered locus">MT1384</name>
</gene>